<proteinExistence type="evidence at transcript level"/>
<gene>
    <name type="primary">Il2</name>
</gene>
<organism>
    <name type="scientific">Mus spretus</name>
    <name type="common">Western Mediterranean mouse</name>
    <name type="synonym">Algerian mouse</name>
    <dbReference type="NCBI Taxonomy" id="10096"/>
    <lineage>
        <taxon>Eukaryota</taxon>
        <taxon>Metazoa</taxon>
        <taxon>Chordata</taxon>
        <taxon>Craniata</taxon>
        <taxon>Vertebrata</taxon>
        <taxon>Euteleostomi</taxon>
        <taxon>Mammalia</taxon>
        <taxon>Eutheria</taxon>
        <taxon>Euarchontoglires</taxon>
        <taxon>Glires</taxon>
        <taxon>Rodentia</taxon>
        <taxon>Myomorpha</taxon>
        <taxon>Muroidea</taxon>
        <taxon>Muridae</taxon>
        <taxon>Murinae</taxon>
        <taxon>Mus</taxon>
        <taxon>Mus</taxon>
    </lineage>
</organism>
<dbReference type="EMBL" id="L07575">
    <property type="protein sequence ID" value="AAA39327.1"/>
    <property type="molecule type" value="Genomic_DNA"/>
</dbReference>
<dbReference type="EMBL" id="U41398">
    <property type="protein sequence ID" value="AAB39205.1"/>
    <property type="status" value="ALT_SEQ"/>
    <property type="molecule type" value="Genomic_DNA"/>
</dbReference>
<dbReference type="EMBL" id="U41495">
    <property type="protein sequence ID" value="AAB39207.1"/>
    <property type="status" value="ALT_SEQ"/>
    <property type="molecule type" value="mRNA"/>
</dbReference>
<dbReference type="PIR" id="I68870">
    <property type="entry name" value="I68870"/>
</dbReference>
<dbReference type="SMR" id="Q08867"/>
<dbReference type="GlyCosmos" id="Q08867">
    <property type="glycosylation" value="1 site, No reported glycans"/>
</dbReference>
<dbReference type="MGI" id="MGI:96548">
    <property type="gene designation" value="Il2"/>
</dbReference>
<dbReference type="GO" id="GO:0005615">
    <property type="term" value="C:extracellular space"/>
    <property type="evidence" value="ECO:0007669"/>
    <property type="project" value="UniProtKB-KW"/>
</dbReference>
<dbReference type="GO" id="GO:0005125">
    <property type="term" value="F:cytokine activity"/>
    <property type="evidence" value="ECO:0007669"/>
    <property type="project" value="UniProtKB-KW"/>
</dbReference>
<dbReference type="GO" id="GO:0008083">
    <property type="term" value="F:growth factor activity"/>
    <property type="evidence" value="ECO:0007669"/>
    <property type="project" value="UniProtKB-KW"/>
</dbReference>
<dbReference type="GO" id="GO:0005134">
    <property type="term" value="F:interleukin-2 receptor binding"/>
    <property type="evidence" value="ECO:0007669"/>
    <property type="project" value="InterPro"/>
</dbReference>
<dbReference type="GO" id="GO:0002250">
    <property type="term" value="P:adaptive immune response"/>
    <property type="evidence" value="ECO:0007669"/>
    <property type="project" value="UniProtKB-KW"/>
</dbReference>
<dbReference type="Gene3D" id="1.20.1250.10">
    <property type="match status" value="1"/>
</dbReference>
<dbReference type="InterPro" id="IPR009079">
    <property type="entry name" value="4_helix_cytokine-like_core"/>
</dbReference>
<dbReference type="InterPro" id="IPR000779">
    <property type="entry name" value="IL-2"/>
</dbReference>
<dbReference type="InterPro" id="IPR030477">
    <property type="entry name" value="IL-2_CS"/>
</dbReference>
<dbReference type="PANTHER" id="PTHR48487">
    <property type="entry name" value="INTERLEUKIN-2"/>
    <property type="match status" value="1"/>
</dbReference>
<dbReference type="PANTHER" id="PTHR48487:SF1">
    <property type="entry name" value="INTERLEUKIN-2"/>
    <property type="match status" value="1"/>
</dbReference>
<dbReference type="Pfam" id="PF00715">
    <property type="entry name" value="IL2"/>
    <property type="match status" value="1"/>
</dbReference>
<dbReference type="PRINTS" id="PR00265">
    <property type="entry name" value="INTERLEUKIN2"/>
</dbReference>
<dbReference type="SMART" id="SM00189">
    <property type="entry name" value="IL2"/>
    <property type="match status" value="1"/>
</dbReference>
<dbReference type="SUPFAM" id="SSF47266">
    <property type="entry name" value="4-helical cytokines"/>
    <property type="match status" value="1"/>
</dbReference>
<dbReference type="PROSITE" id="PS00424">
    <property type="entry name" value="INTERLEUKIN_2"/>
    <property type="match status" value="1"/>
</dbReference>
<sequence>MYSMQLASCVTLTLVLLVNSAPTSSPTSSSTSSSTAEAQQQQQHLEQLLMDLQELLSRMENYRNLKLPRMLTFKFYLPKQATELKDLQCLEDELGPLQSVLDLTQSKSFQLEDAENFISNIRVTVVKLKGSDNTIECQFDDESATVVDFLRRWIAFCQSIISTSPQ</sequence>
<name>IL2_MUSSP</name>
<feature type="signal peptide" evidence="1">
    <location>
        <begin position="1"/>
        <end position="20"/>
    </location>
</feature>
<feature type="chain" id="PRO_0000015494" description="Interleukin-2">
    <location>
        <begin position="21"/>
        <end position="166"/>
    </location>
</feature>
<feature type="glycosylation site" description="O-linked (GalNAc...) threonine" evidence="1">
    <location>
        <position position="23"/>
    </location>
</feature>
<feature type="disulfide bond" evidence="1">
    <location>
        <begin position="89"/>
        <end position="137"/>
    </location>
</feature>
<feature type="sequence variant">
    <location>
        <begin position="24"/>
        <end position="27"/>
    </location>
</feature>
<keyword id="KW-1064">Adaptive immunity</keyword>
<keyword id="KW-0202">Cytokine</keyword>
<keyword id="KW-1015">Disulfide bond</keyword>
<keyword id="KW-0325">Glycoprotein</keyword>
<keyword id="KW-0339">Growth factor</keyword>
<keyword id="KW-0391">Immunity</keyword>
<keyword id="KW-0964">Secreted</keyword>
<keyword id="KW-0732">Signal</keyword>
<protein>
    <recommendedName>
        <fullName>Interleukin-2</fullName>
        <shortName>IL-2</shortName>
    </recommendedName>
    <alternativeName>
        <fullName>T-cell growth factor</fullName>
        <shortName>TCGF</shortName>
    </alternativeName>
</protein>
<comment type="function">
    <text evidence="2">Cytokine produced by activated CD4-positive helper T-cells and to a lesser extend activated CD8-positive T-cells and natural killer (NK) cells that plays pivotal roles in the immune response and tolerance. Binds to a receptor complex composed of either the high-affinity trimeric IL-2R (IL2RA/CD25, IL2RB/CD122 and IL2RG/CD132) or the low-affinity dimeric IL-2R (IL2RB and IL2RG). Interaction with the receptor leads to oligomerization and conformation changes in the IL-2R subunits resulting in downstream signaling starting with phosphorylation of JAK1 and JAK3. In turn, JAK1 and JAK3 phosphorylate the receptor to form a docking site leading to the phosphorylation of several substrates including STAT5. This process leads to activation of several pathways including STAT, phosphoinositide-3-kinase/PI3K and mitogen-activated protein kinase/MAPK pathways. Functions as a T-cell growth factor and can increase NK-cell cytolytic activity as well. Promotes strong proliferation of activated B-cells and subsequently immunoglobulin production. Plays a pivotal role in regulating the adaptive immune system by controlling the survival and proliferation of regulatory T-cells, which are required for the maintenance of immune tolerance. Moreover, participates in the differentiation and homeostasis of effector T-cell subsets, including Th1, Th2, Th17 as well as memory CD8-positive T-cells.</text>
</comment>
<comment type="subcellular location">
    <subcellularLocation>
        <location>Secreted</location>
    </subcellularLocation>
</comment>
<comment type="similarity">
    <text evidence="3">Belongs to the IL-2 family.</text>
</comment>
<evidence type="ECO:0000250" key="1"/>
<evidence type="ECO:0000250" key="2">
    <source>
        <dbReference type="UniProtKB" id="P60568"/>
    </source>
</evidence>
<evidence type="ECO:0000305" key="3"/>
<accession>Q08867</accession>
<accession>P70462</accession>
<accession>P70463</accession>
<reference key="1">
    <citation type="journal article" date="1993" name="Immunogenetics">
        <title>Existence of at least five interleukin-2 molecules in different mouse strains.</title>
        <authorList>
            <person name="Matesanz F."/>
            <person name="Alcina A."/>
            <person name="Pellicer A."/>
        </authorList>
    </citation>
    <scope>NUCLEOTIDE SEQUENCE [GENOMIC DNA] OF 1-60</scope>
    <source>
        <strain>SPRET/EI</strain>
    </source>
</reference>
<reference key="2">
    <citation type="journal article" date="1996" name="Eur. J. Immunol.">
        <title>Glutamine and tetrapeptide repeat variations affect the biological activity of different mouse interleukin-2 alleles.</title>
        <authorList>
            <person name="Matesanz F."/>
            <person name="Alcina A."/>
        </authorList>
    </citation>
    <scope>NUCLEOTIDE SEQUENCE [GENOMIC DNA / MRNA] OF 21-166</scope>
    <source>
        <strain>SPRET/EI</strain>
    </source>
</reference>